<protein>
    <recommendedName>
        <fullName evidence="1">UvrABC system protein B</fullName>
        <shortName evidence="1">Protein UvrB</shortName>
    </recommendedName>
    <alternativeName>
        <fullName evidence="1">Excinuclease ABC subunit B</fullName>
    </alternativeName>
</protein>
<evidence type="ECO:0000255" key="1">
    <source>
        <dbReference type="HAMAP-Rule" id="MF_00204"/>
    </source>
</evidence>
<organism>
    <name type="scientific">Bacteroides thetaiotaomicron (strain ATCC 29148 / DSM 2079 / JCM 5827 / CCUG 10774 / NCTC 10582 / VPI-5482 / E50)</name>
    <dbReference type="NCBI Taxonomy" id="226186"/>
    <lineage>
        <taxon>Bacteria</taxon>
        <taxon>Pseudomonadati</taxon>
        <taxon>Bacteroidota</taxon>
        <taxon>Bacteroidia</taxon>
        <taxon>Bacteroidales</taxon>
        <taxon>Bacteroidaceae</taxon>
        <taxon>Bacteroides</taxon>
    </lineage>
</organism>
<name>UVRB_BACTN</name>
<comment type="function">
    <text evidence="1">The UvrABC repair system catalyzes the recognition and processing of DNA lesions. A damage recognition complex composed of 2 UvrA and 2 UvrB subunits scans DNA for abnormalities. Upon binding of the UvrA(2)B(2) complex to a putative damaged site, the DNA wraps around one UvrB monomer. DNA wrap is dependent on ATP binding by UvrB and probably causes local melting of the DNA helix, facilitating insertion of UvrB beta-hairpin between the DNA strands. Then UvrB probes one DNA strand for the presence of a lesion. If a lesion is found the UvrA subunits dissociate and the UvrB-DNA preincision complex is formed. This complex is subsequently bound by UvrC and the second UvrB is released. If no lesion is found, the DNA wraps around the other UvrB subunit that will check the other stand for damage.</text>
</comment>
<comment type="subunit">
    <text evidence="1">Forms a heterotetramer with UvrA during the search for lesions. Interacts with UvrC in an incision complex.</text>
</comment>
<comment type="subcellular location">
    <subcellularLocation>
        <location evidence="1">Cytoplasm</location>
    </subcellularLocation>
</comment>
<comment type="domain">
    <text evidence="1">The beta-hairpin motif is involved in DNA binding.</text>
</comment>
<comment type="similarity">
    <text evidence="1">Belongs to the UvrB family.</text>
</comment>
<feature type="chain" id="PRO_0000227288" description="UvrABC system protein B">
    <location>
        <begin position="1"/>
        <end position="677"/>
    </location>
</feature>
<feature type="domain" description="Helicase ATP-binding" evidence="1">
    <location>
        <begin position="24"/>
        <end position="412"/>
    </location>
</feature>
<feature type="domain" description="Helicase C-terminal" evidence="1">
    <location>
        <begin position="429"/>
        <end position="591"/>
    </location>
</feature>
<feature type="domain" description="UVR" evidence="1">
    <location>
        <begin position="636"/>
        <end position="671"/>
    </location>
</feature>
<feature type="short sequence motif" description="Beta-hairpin">
    <location>
        <begin position="90"/>
        <end position="113"/>
    </location>
</feature>
<feature type="binding site" evidence="1">
    <location>
        <begin position="37"/>
        <end position="44"/>
    </location>
    <ligand>
        <name>ATP</name>
        <dbReference type="ChEBI" id="CHEBI:30616"/>
    </ligand>
</feature>
<accession>Q8AA95</accession>
<keyword id="KW-0067">ATP-binding</keyword>
<keyword id="KW-0963">Cytoplasm</keyword>
<keyword id="KW-0227">DNA damage</keyword>
<keyword id="KW-0228">DNA excision</keyword>
<keyword id="KW-0234">DNA repair</keyword>
<keyword id="KW-0267">Excision nuclease</keyword>
<keyword id="KW-0547">Nucleotide-binding</keyword>
<keyword id="KW-1185">Reference proteome</keyword>
<keyword id="KW-0742">SOS response</keyword>
<proteinExistence type="inferred from homology"/>
<reference key="1">
    <citation type="journal article" date="2003" name="Science">
        <title>A genomic view of the human-Bacteroides thetaiotaomicron symbiosis.</title>
        <authorList>
            <person name="Xu J."/>
            <person name="Bjursell M.K."/>
            <person name="Himrod J."/>
            <person name="Deng S."/>
            <person name="Carmichael L.K."/>
            <person name="Chiang H.C."/>
            <person name="Hooper L.V."/>
            <person name="Gordon J.I."/>
        </authorList>
    </citation>
    <scope>NUCLEOTIDE SEQUENCE [LARGE SCALE GENOMIC DNA]</scope>
    <source>
        <strain>ATCC 29148 / DSM 2079 / JCM 5827 / CCUG 10774 / NCTC 10582 / VPI-5482 / E50</strain>
    </source>
</reference>
<gene>
    <name evidence="1" type="primary">uvrB</name>
    <name type="ordered locus">BT_0570</name>
</gene>
<sequence length="677" mass="77113">MNFELTSAYKPTGDQPEAIAQLTEGVLQGVPAQTLLGVTGSGKTFTIANVIANINKPTLILSHNKTLAAQLYSEFKGFFPNNAVEYYVSYYDYYQPEAYLPNSDTYIEKDLAINDEIDKLRLAATSSLLSGRKDVVVVSSVSCIYGMGNPSDFYKNVIEIERGRMLDRNVFLRRLVDSLYVRNDIDLNRGNFRVKGDTVDIFLAYSDTLLRVTFWGDEIDGIEEVDPITGVTTAPFEAYKIYPANLFMTTKEATLRAIHEIEDDLTKQVAFFESIGKEYEAKRLYERVTYDMEMIRELGHCSGIENYSRYFDGRAAGTRPYCLLDFFPDDFLLVIDESHVSVPQVRAMYGGDRARKINLVEYGFRLPAAMDNRPLKFEEFEEMTKQVIYVSATPAEYELIQSEGIVVEQVIRPTGLLDPVIEVRPSLNQIDDLMEEIQLRIEKEERVLVTTLTKRMAEELTEYLLNNNVRCNYIHSDVDTLERVKIMDDLRQGVYDVLIGVNLLREGLDLPEVSLVAILDADKEGFLRSHRSLTQTAGRAARNVNGKVIMYADKITDSMRLTIDETNRRREKQLAYNEANGITPQQIKKARNLSVFGSPGSEADELLKEKHAYVEPSSPNIAADPIVQYMSKAQMEKSIERTRKLMQEAAKKLEFIEAAQYRNELLKLEDLMKEKWG</sequence>
<dbReference type="EMBL" id="AE015928">
    <property type="protein sequence ID" value="AAO75677.1"/>
    <property type="molecule type" value="Genomic_DNA"/>
</dbReference>
<dbReference type="RefSeq" id="NP_809483.1">
    <property type="nucleotide sequence ID" value="NC_004663.1"/>
</dbReference>
<dbReference type="RefSeq" id="WP_008763156.1">
    <property type="nucleotide sequence ID" value="NC_004663.1"/>
</dbReference>
<dbReference type="SMR" id="Q8AA95"/>
<dbReference type="FunCoup" id="Q8AA95">
    <property type="interactions" value="171"/>
</dbReference>
<dbReference type="STRING" id="226186.BT_0570"/>
<dbReference type="PaxDb" id="226186-BT_0570"/>
<dbReference type="EnsemblBacteria" id="AAO75677">
    <property type="protein sequence ID" value="AAO75677"/>
    <property type="gene ID" value="BT_0570"/>
</dbReference>
<dbReference type="GeneID" id="60926527"/>
<dbReference type="KEGG" id="bth:BT_0570"/>
<dbReference type="PATRIC" id="fig|226186.12.peg.571"/>
<dbReference type="eggNOG" id="COG0556">
    <property type="taxonomic scope" value="Bacteria"/>
</dbReference>
<dbReference type="HOGENOM" id="CLU_009621_2_1_10"/>
<dbReference type="InParanoid" id="Q8AA95"/>
<dbReference type="OrthoDB" id="9806651at2"/>
<dbReference type="Proteomes" id="UP000001414">
    <property type="component" value="Chromosome"/>
</dbReference>
<dbReference type="GO" id="GO:0005737">
    <property type="term" value="C:cytoplasm"/>
    <property type="evidence" value="ECO:0007669"/>
    <property type="project" value="UniProtKB-SubCell"/>
</dbReference>
<dbReference type="GO" id="GO:0009380">
    <property type="term" value="C:excinuclease repair complex"/>
    <property type="evidence" value="ECO:0000318"/>
    <property type="project" value="GO_Central"/>
</dbReference>
<dbReference type="GO" id="GO:0005524">
    <property type="term" value="F:ATP binding"/>
    <property type="evidence" value="ECO:0007669"/>
    <property type="project" value="UniProtKB-UniRule"/>
</dbReference>
<dbReference type="GO" id="GO:0016887">
    <property type="term" value="F:ATP hydrolysis activity"/>
    <property type="evidence" value="ECO:0007669"/>
    <property type="project" value="InterPro"/>
</dbReference>
<dbReference type="GO" id="GO:0003677">
    <property type="term" value="F:DNA binding"/>
    <property type="evidence" value="ECO:0007669"/>
    <property type="project" value="UniProtKB-UniRule"/>
</dbReference>
<dbReference type="GO" id="GO:0009381">
    <property type="term" value="F:excinuclease ABC activity"/>
    <property type="evidence" value="ECO:0007669"/>
    <property type="project" value="UniProtKB-UniRule"/>
</dbReference>
<dbReference type="GO" id="GO:0000715">
    <property type="term" value="P:nucleotide-excision repair, DNA damage recognition"/>
    <property type="evidence" value="ECO:0000318"/>
    <property type="project" value="GO_Central"/>
</dbReference>
<dbReference type="GO" id="GO:0009432">
    <property type="term" value="P:SOS response"/>
    <property type="evidence" value="ECO:0007669"/>
    <property type="project" value="UniProtKB-UniRule"/>
</dbReference>
<dbReference type="CDD" id="cd17916">
    <property type="entry name" value="DEXHc_UvrB"/>
    <property type="match status" value="1"/>
</dbReference>
<dbReference type="CDD" id="cd18790">
    <property type="entry name" value="SF2_C_UvrB"/>
    <property type="match status" value="1"/>
</dbReference>
<dbReference type="Gene3D" id="3.40.50.300">
    <property type="entry name" value="P-loop containing nucleotide triphosphate hydrolases"/>
    <property type="match status" value="3"/>
</dbReference>
<dbReference type="Gene3D" id="4.10.860.10">
    <property type="entry name" value="UVR domain"/>
    <property type="match status" value="1"/>
</dbReference>
<dbReference type="HAMAP" id="MF_00204">
    <property type="entry name" value="UvrB"/>
    <property type="match status" value="1"/>
</dbReference>
<dbReference type="InterPro" id="IPR006935">
    <property type="entry name" value="Helicase/UvrB_N"/>
</dbReference>
<dbReference type="InterPro" id="IPR014001">
    <property type="entry name" value="Helicase_ATP-bd"/>
</dbReference>
<dbReference type="InterPro" id="IPR001650">
    <property type="entry name" value="Helicase_C-like"/>
</dbReference>
<dbReference type="InterPro" id="IPR027417">
    <property type="entry name" value="P-loop_NTPase"/>
</dbReference>
<dbReference type="InterPro" id="IPR001943">
    <property type="entry name" value="UVR_dom"/>
</dbReference>
<dbReference type="InterPro" id="IPR036876">
    <property type="entry name" value="UVR_dom_sf"/>
</dbReference>
<dbReference type="InterPro" id="IPR004807">
    <property type="entry name" value="UvrB"/>
</dbReference>
<dbReference type="InterPro" id="IPR041471">
    <property type="entry name" value="UvrB_inter"/>
</dbReference>
<dbReference type="InterPro" id="IPR024759">
    <property type="entry name" value="UvrB_YAD/RRR_dom"/>
</dbReference>
<dbReference type="NCBIfam" id="NF003673">
    <property type="entry name" value="PRK05298.1"/>
    <property type="match status" value="1"/>
</dbReference>
<dbReference type="NCBIfam" id="TIGR00631">
    <property type="entry name" value="uvrb"/>
    <property type="match status" value="1"/>
</dbReference>
<dbReference type="PANTHER" id="PTHR24029">
    <property type="entry name" value="UVRABC SYSTEM PROTEIN B"/>
    <property type="match status" value="1"/>
</dbReference>
<dbReference type="PANTHER" id="PTHR24029:SF0">
    <property type="entry name" value="UVRABC SYSTEM PROTEIN B"/>
    <property type="match status" value="1"/>
</dbReference>
<dbReference type="Pfam" id="PF00271">
    <property type="entry name" value="Helicase_C"/>
    <property type="match status" value="1"/>
</dbReference>
<dbReference type="Pfam" id="PF04851">
    <property type="entry name" value="ResIII"/>
    <property type="match status" value="1"/>
</dbReference>
<dbReference type="Pfam" id="PF02151">
    <property type="entry name" value="UVR"/>
    <property type="match status" value="1"/>
</dbReference>
<dbReference type="Pfam" id="PF12344">
    <property type="entry name" value="UvrB"/>
    <property type="match status" value="1"/>
</dbReference>
<dbReference type="Pfam" id="PF17757">
    <property type="entry name" value="UvrB_inter"/>
    <property type="match status" value="1"/>
</dbReference>
<dbReference type="SMART" id="SM00487">
    <property type="entry name" value="DEXDc"/>
    <property type="match status" value="1"/>
</dbReference>
<dbReference type="SMART" id="SM00490">
    <property type="entry name" value="HELICc"/>
    <property type="match status" value="1"/>
</dbReference>
<dbReference type="SUPFAM" id="SSF46600">
    <property type="entry name" value="C-terminal UvrC-binding domain of UvrB"/>
    <property type="match status" value="1"/>
</dbReference>
<dbReference type="SUPFAM" id="SSF52540">
    <property type="entry name" value="P-loop containing nucleoside triphosphate hydrolases"/>
    <property type="match status" value="2"/>
</dbReference>
<dbReference type="PROSITE" id="PS51192">
    <property type="entry name" value="HELICASE_ATP_BIND_1"/>
    <property type="match status" value="1"/>
</dbReference>
<dbReference type="PROSITE" id="PS51194">
    <property type="entry name" value="HELICASE_CTER"/>
    <property type="match status" value="1"/>
</dbReference>
<dbReference type="PROSITE" id="PS50151">
    <property type="entry name" value="UVR"/>
    <property type="match status" value="1"/>
</dbReference>